<name>FAF2_ASCSU</name>
<reference key="1">
    <citation type="journal article" date="1993" name="Peptides">
        <title>AF2, an Ascaris neuropeptide: isolation, sequence, and bioactivity.</title>
        <authorList>
            <person name="Cowden C."/>
            <person name="Stretton A.O.W."/>
        </authorList>
    </citation>
    <scope>PROTEIN SEQUENCE</scope>
    <scope>AMIDATION AT PHE-7</scope>
</reference>
<protein>
    <recommendedName>
        <fullName>FMRFamide-like neuropeptide AF2</fullName>
    </recommendedName>
</protein>
<comment type="function">
    <text>Has effects on muscle tension.</text>
</comment>
<comment type="subcellular location">
    <subcellularLocation>
        <location>Secreted</location>
    </subcellularLocation>
</comment>
<comment type="tissue specificity">
    <text>Found in the nerve cords and a variety of ganglia particularly in the anterior regions.</text>
</comment>
<comment type="similarity">
    <text evidence="2">Belongs to the FARP (FMRFamide related peptide) family.</text>
</comment>
<sequence length="7" mass="992">KHEYLRF</sequence>
<accession>P67879</accession>
<accession>P31890</accession>
<evidence type="ECO:0000269" key="1">
    <source>
    </source>
</evidence>
<evidence type="ECO:0000305" key="2"/>
<organism>
    <name type="scientific">Ascaris suum</name>
    <name type="common">Pig roundworm</name>
    <name type="synonym">Ascaris lumbricoides</name>
    <dbReference type="NCBI Taxonomy" id="6253"/>
    <lineage>
        <taxon>Eukaryota</taxon>
        <taxon>Metazoa</taxon>
        <taxon>Ecdysozoa</taxon>
        <taxon>Nematoda</taxon>
        <taxon>Chromadorea</taxon>
        <taxon>Rhabditida</taxon>
        <taxon>Spirurina</taxon>
        <taxon>Ascaridomorpha</taxon>
        <taxon>Ascaridoidea</taxon>
        <taxon>Ascarididae</taxon>
        <taxon>Ascaris</taxon>
    </lineage>
</organism>
<feature type="peptide" id="PRO_0000043656" description="FMRFamide-like neuropeptide AF2">
    <location>
        <begin position="1"/>
        <end position="7"/>
    </location>
</feature>
<feature type="modified residue" description="Phenylalanine amide" evidence="1">
    <location>
        <position position="7"/>
    </location>
</feature>
<keyword id="KW-0027">Amidation</keyword>
<keyword id="KW-0903">Direct protein sequencing</keyword>
<keyword id="KW-0527">Neuropeptide</keyword>
<keyword id="KW-0964">Secreted</keyword>
<dbReference type="GO" id="GO:0005576">
    <property type="term" value="C:extracellular region"/>
    <property type="evidence" value="ECO:0007669"/>
    <property type="project" value="UniProtKB-SubCell"/>
</dbReference>
<dbReference type="GO" id="GO:0007218">
    <property type="term" value="P:neuropeptide signaling pathway"/>
    <property type="evidence" value="ECO:0007669"/>
    <property type="project" value="UniProtKB-KW"/>
</dbReference>
<proteinExistence type="evidence at protein level"/>